<organism>
    <name type="scientific">Nitrosomonas europaea (strain ATCC 19718 / CIP 103999 / KCTC 2705 / NBRC 14298)</name>
    <dbReference type="NCBI Taxonomy" id="228410"/>
    <lineage>
        <taxon>Bacteria</taxon>
        <taxon>Pseudomonadati</taxon>
        <taxon>Pseudomonadota</taxon>
        <taxon>Betaproteobacteria</taxon>
        <taxon>Nitrosomonadales</taxon>
        <taxon>Nitrosomonadaceae</taxon>
        <taxon>Nitrosomonas</taxon>
    </lineage>
</organism>
<sequence>MKLKFTKMHGLGNDFIVIDAINQSVSLDPATIRRWADRHFGIGFDQLLVVEKPGESGDFRYRIFNADGGEVEQCGNGARCFARFVRDHDLTRKNTIRVETACGIIMPTVEENGEVSVDMGIPRFDPARIPFITQERALTYPLNVNDREIEISAVSMGNPHAVQIVPDIDLAPVTSEGPAIESHPFFPEKVNAGYMQIVDRTHIRLRVFERGTGETLACGTGACAAVVSGISRGLLDSEVQVTMRGGNLRIRWEGEDQPVWMTGPAVSVFEGTIDL</sequence>
<reference key="1">
    <citation type="journal article" date="2003" name="J. Bacteriol.">
        <title>Complete genome sequence of the ammonia-oxidizing bacterium and obligate chemolithoautotroph Nitrosomonas europaea.</title>
        <authorList>
            <person name="Chain P."/>
            <person name="Lamerdin J.E."/>
            <person name="Larimer F.W."/>
            <person name="Regala W."/>
            <person name="Lao V."/>
            <person name="Land M.L."/>
            <person name="Hauser L."/>
            <person name="Hooper A.B."/>
            <person name="Klotz M.G."/>
            <person name="Norton J."/>
            <person name="Sayavedra-Soto L.A."/>
            <person name="Arciero D.M."/>
            <person name="Hommes N.G."/>
            <person name="Whittaker M.M."/>
            <person name="Arp D.J."/>
        </authorList>
    </citation>
    <scope>NUCLEOTIDE SEQUENCE [LARGE SCALE GENOMIC DNA]</scope>
    <source>
        <strain>ATCC 19718 / CIP 103999 / KCTC 2705 / NBRC 14298</strain>
    </source>
</reference>
<protein>
    <recommendedName>
        <fullName evidence="1">Diaminopimelate epimerase</fullName>
        <shortName evidence="1">DAP epimerase</shortName>
        <ecNumber evidence="1">5.1.1.7</ecNumber>
    </recommendedName>
    <alternativeName>
        <fullName evidence="1">PLP-independent amino acid racemase</fullName>
    </alternativeName>
</protein>
<keyword id="KW-0028">Amino-acid biosynthesis</keyword>
<keyword id="KW-0963">Cytoplasm</keyword>
<keyword id="KW-0413">Isomerase</keyword>
<keyword id="KW-0457">Lysine biosynthesis</keyword>
<keyword id="KW-1185">Reference proteome</keyword>
<feature type="chain" id="PRO_1000011916" description="Diaminopimelate epimerase">
    <location>
        <begin position="1"/>
        <end position="275"/>
    </location>
</feature>
<feature type="active site" description="Proton donor" evidence="1">
    <location>
        <position position="74"/>
    </location>
</feature>
<feature type="active site" description="Proton acceptor" evidence="1">
    <location>
        <position position="218"/>
    </location>
</feature>
<feature type="binding site" evidence="1">
    <location>
        <position position="13"/>
    </location>
    <ligand>
        <name>substrate</name>
    </ligand>
</feature>
<feature type="binding site" evidence="1">
    <location>
        <position position="46"/>
    </location>
    <ligand>
        <name>substrate</name>
    </ligand>
</feature>
<feature type="binding site" evidence="1">
    <location>
        <position position="65"/>
    </location>
    <ligand>
        <name>substrate</name>
    </ligand>
</feature>
<feature type="binding site" evidence="1">
    <location>
        <begin position="75"/>
        <end position="76"/>
    </location>
    <ligand>
        <name>substrate</name>
    </ligand>
</feature>
<feature type="binding site" evidence="1">
    <location>
        <position position="158"/>
    </location>
    <ligand>
        <name>substrate</name>
    </ligand>
</feature>
<feature type="binding site" evidence="1">
    <location>
        <position position="191"/>
    </location>
    <ligand>
        <name>substrate</name>
    </ligand>
</feature>
<feature type="binding site" evidence="1">
    <location>
        <begin position="209"/>
        <end position="210"/>
    </location>
    <ligand>
        <name>substrate</name>
    </ligand>
</feature>
<feature type="binding site" evidence="1">
    <location>
        <begin position="219"/>
        <end position="220"/>
    </location>
    <ligand>
        <name>substrate</name>
    </ligand>
</feature>
<feature type="site" description="Could be important to modulate the pK values of the two catalytic cysteine residues" evidence="1">
    <location>
        <position position="160"/>
    </location>
</feature>
<feature type="site" description="Could be important to modulate the pK values of the two catalytic cysteine residues" evidence="1">
    <location>
        <position position="209"/>
    </location>
</feature>
<name>DAPF_NITEU</name>
<comment type="function">
    <text evidence="1">Catalyzes the stereoinversion of LL-2,6-diaminopimelate (L,L-DAP) to meso-diaminopimelate (meso-DAP), a precursor of L-lysine and an essential component of the bacterial peptidoglycan.</text>
</comment>
<comment type="catalytic activity">
    <reaction evidence="1">
        <text>(2S,6S)-2,6-diaminopimelate = meso-2,6-diaminopimelate</text>
        <dbReference type="Rhea" id="RHEA:15393"/>
        <dbReference type="ChEBI" id="CHEBI:57609"/>
        <dbReference type="ChEBI" id="CHEBI:57791"/>
        <dbReference type="EC" id="5.1.1.7"/>
    </reaction>
</comment>
<comment type="pathway">
    <text evidence="1">Amino-acid biosynthesis; L-lysine biosynthesis via DAP pathway; DL-2,6-diaminopimelate from LL-2,6-diaminopimelate: step 1/1.</text>
</comment>
<comment type="subunit">
    <text evidence="1">Homodimer.</text>
</comment>
<comment type="subcellular location">
    <subcellularLocation>
        <location evidence="1">Cytoplasm</location>
    </subcellularLocation>
</comment>
<comment type="similarity">
    <text evidence="1">Belongs to the diaminopimelate epimerase family.</text>
</comment>
<dbReference type="EC" id="5.1.1.7" evidence="1"/>
<dbReference type="EMBL" id="AL954747">
    <property type="protein sequence ID" value="CAD85523.1"/>
    <property type="molecule type" value="Genomic_DNA"/>
</dbReference>
<dbReference type="RefSeq" id="WP_011112176.1">
    <property type="nucleotide sequence ID" value="NC_004757.1"/>
</dbReference>
<dbReference type="SMR" id="Q82U84"/>
<dbReference type="STRING" id="228410.NE1612"/>
<dbReference type="GeneID" id="87104780"/>
<dbReference type="KEGG" id="neu:NE1612"/>
<dbReference type="eggNOG" id="COG0253">
    <property type="taxonomic scope" value="Bacteria"/>
</dbReference>
<dbReference type="HOGENOM" id="CLU_053306_1_1_4"/>
<dbReference type="OrthoDB" id="9805408at2"/>
<dbReference type="PhylomeDB" id="Q82U84"/>
<dbReference type="UniPathway" id="UPA00034">
    <property type="reaction ID" value="UER00025"/>
</dbReference>
<dbReference type="Proteomes" id="UP000001416">
    <property type="component" value="Chromosome"/>
</dbReference>
<dbReference type="GO" id="GO:0005829">
    <property type="term" value="C:cytosol"/>
    <property type="evidence" value="ECO:0007669"/>
    <property type="project" value="TreeGrafter"/>
</dbReference>
<dbReference type="GO" id="GO:0008837">
    <property type="term" value="F:diaminopimelate epimerase activity"/>
    <property type="evidence" value="ECO:0007669"/>
    <property type="project" value="UniProtKB-UniRule"/>
</dbReference>
<dbReference type="GO" id="GO:0009089">
    <property type="term" value="P:lysine biosynthetic process via diaminopimelate"/>
    <property type="evidence" value="ECO:0007669"/>
    <property type="project" value="UniProtKB-UniRule"/>
</dbReference>
<dbReference type="FunFam" id="3.10.310.10:FF:000001">
    <property type="entry name" value="Diaminopimelate epimerase"/>
    <property type="match status" value="1"/>
</dbReference>
<dbReference type="Gene3D" id="3.10.310.10">
    <property type="entry name" value="Diaminopimelate Epimerase, Chain A, domain 1"/>
    <property type="match status" value="2"/>
</dbReference>
<dbReference type="HAMAP" id="MF_00197">
    <property type="entry name" value="DAP_epimerase"/>
    <property type="match status" value="1"/>
</dbReference>
<dbReference type="InterPro" id="IPR018510">
    <property type="entry name" value="DAP_epimerase_AS"/>
</dbReference>
<dbReference type="InterPro" id="IPR001653">
    <property type="entry name" value="DAP_epimerase_DapF"/>
</dbReference>
<dbReference type="NCBIfam" id="TIGR00652">
    <property type="entry name" value="DapF"/>
    <property type="match status" value="1"/>
</dbReference>
<dbReference type="PANTHER" id="PTHR31689:SF0">
    <property type="entry name" value="DIAMINOPIMELATE EPIMERASE"/>
    <property type="match status" value="1"/>
</dbReference>
<dbReference type="PANTHER" id="PTHR31689">
    <property type="entry name" value="DIAMINOPIMELATE EPIMERASE, CHLOROPLASTIC"/>
    <property type="match status" value="1"/>
</dbReference>
<dbReference type="Pfam" id="PF01678">
    <property type="entry name" value="DAP_epimerase"/>
    <property type="match status" value="2"/>
</dbReference>
<dbReference type="SUPFAM" id="SSF54506">
    <property type="entry name" value="Diaminopimelate epimerase-like"/>
    <property type="match status" value="1"/>
</dbReference>
<dbReference type="PROSITE" id="PS01326">
    <property type="entry name" value="DAP_EPIMERASE"/>
    <property type="match status" value="1"/>
</dbReference>
<accession>Q82U84</accession>
<evidence type="ECO:0000255" key="1">
    <source>
        <dbReference type="HAMAP-Rule" id="MF_00197"/>
    </source>
</evidence>
<gene>
    <name evidence="1" type="primary">dapF</name>
    <name type="ordered locus">NE1612</name>
</gene>
<proteinExistence type="inferred from homology"/>